<comment type="function">
    <text evidence="1">A non-essential component of the chromosome segregation machinery (PubMed:29180656). Positions the ParA-ParB-parS chromosome segregation machinery within the cell; BacP seems to be the most important bactofilin in this process (PubMed:29180656). Forms a heteropolymeric, subpolar scaffold in the cell; BacP probably forms the core, BacO contributes to position and integrity while BacN does not seem to contribute to assembly (PubMed:29180656).</text>
</comment>
<comment type="subunit">
    <text evidence="1">Interacts with BacO and BacP, the 3 proteins colocalize as an extended structure (PubMed:29180656).</text>
</comment>
<comment type="subcellular location">
    <subcellularLocation>
        <location evidence="1">Cytoplasm</location>
        <location evidence="1">Cytoskeleton</location>
    </subcellularLocation>
    <text evidence="1">Forms subpolar patches 1-2 um in length; 1 mature patch and one nascent patch in new cells. As cells elongate the nascent patch grows and a new one assembles at midcell, which splits upon division (PubMed:29180656). The patches colocalize with ParB (PubMed:29180656).</text>
</comment>
<comment type="disruption phenotype">
    <text evidence="1 2">BacP has nearly wild-type localization, only minor changes in ParA or ParB-parS location, no changes for PadC (PubMed:29180656). In a triple bacpN-bacO-bacP deletion ParA, ParB-parS and PadC are mislocalized, nucleoids are more compact, DNA origin regions are mislocalized, DNA content increases (PubMed:29180656, PubMed:32738827). The triple bacNOP deletion is synthetically lethal with smc or double scpAB deletions (PubMed:32738827).</text>
</comment>
<comment type="similarity">
    <text evidence="4">Belongs to the bactofilin family.</text>
</comment>
<feature type="chain" id="PRO_0000460327" description="Bactofilin BacN">
    <location>
        <begin position="1"/>
        <end position="113"/>
    </location>
</feature>
<accession>Q1D3H0</accession>
<evidence type="ECO:0000269" key="1">
    <source>
    </source>
</evidence>
<evidence type="ECO:0000269" key="2">
    <source>
    </source>
</evidence>
<evidence type="ECO:0000303" key="3">
    <source>
    </source>
</evidence>
<evidence type="ECO:0000305" key="4">
    <source>
    </source>
</evidence>
<evidence type="ECO:0000312" key="5">
    <source>
        <dbReference type="EMBL" id="ABF92206.1"/>
    </source>
</evidence>
<keyword id="KW-0159">Chromosome partition</keyword>
<keyword id="KW-0963">Cytoplasm</keyword>
<keyword id="KW-0206">Cytoskeleton</keyword>
<keyword id="KW-1185">Reference proteome</keyword>
<reference evidence="5" key="1">
    <citation type="journal article" date="2006" name="Proc. Natl. Acad. Sci. U.S.A.">
        <title>Evolution of sensory complexity recorded in a myxobacterial genome.</title>
        <authorList>
            <person name="Goldman B.S."/>
            <person name="Nierman W.C."/>
            <person name="Kaiser D."/>
            <person name="Slater S.C."/>
            <person name="Durkin A.S."/>
            <person name="Eisen J.A."/>
            <person name="Ronning C.M."/>
            <person name="Barbazuk W.B."/>
            <person name="Blanchard M."/>
            <person name="Field C."/>
            <person name="Halling C."/>
            <person name="Hinkle G."/>
            <person name="Iartchuk O."/>
            <person name="Kim H.S."/>
            <person name="Mackenzie C."/>
            <person name="Madupu R."/>
            <person name="Miller N."/>
            <person name="Shvartsbeyn A."/>
            <person name="Sullivan S.A."/>
            <person name="Vaudin M."/>
            <person name="Wiegand R."/>
            <person name="Kaplan H.B."/>
        </authorList>
    </citation>
    <scope>NUCLEOTIDE SEQUENCE [LARGE SCALE GENOMIC DNA]</scope>
    <source>
        <strain>DK1622</strain>
    </source>
</reference>
<reference key="2">
    <citation type="journal article" date="2017" name="Nat. Commun.">
        <title>Bactofilin-mediated organization of the ParABS chromosome segregation system in Myxococcus xanthus.</title>
        <authorList>
            <person name="Lin L."/>
            <person name="Osorio Valeriano M."/>
            <person name="Harms A."/>
            <person name="Soegaard-Andersen L."/>
            <person name="Thanbichler M."/>
        </authorList>
    </citation>
    <scope>FUNCTION</scope>
    <scope>SUBUNIT</scope>
    <scope>SUBCELLULAR LOCATION</scope>
    <scope>DISRUPTION PHENOTYPE</scope>
    <source>
        <strain>DK1622</strain>
    </source>
</reference>
<reference key="3">
    <citation type="journal article" date="2020" name="Mol. Microbiol.">
        <title>SMC and the bactofilin/PadC scaffold have distinct yet redundant functions in chromosome segregation and organization in Myxococcus xanthus.</title>
        <authorList>
            <person name="Anand D."/>
            <person name="Schumacher D."/>
            <person name="Soegaard-Andersen L."/>
        </authorList>
    </citation>
    <scope>DISRUPTION PHENOTYPE</scope>
    <source>
        <strain>DK1622</strain>
    </source>
</reference>
<organism>
    <name type="scientific">Myxococcus xanthus (strain DK1622)</name>
    <dbReference type="NCBI Taxonomy" id="246197"/>
    <lineage>
        <taxon>Bacteria</taxon>
        <taxon>Pseudomonadati</taxon>
        <taxon>Myxococcota</taxon>
        <taxon>Myxococcia</taxon>
        <taxon>Myxococcales</taxon>
        <taxon>Cystobacterineae</taxon>
        <taxon>Myxococcaceae</taxon>
        <taxon>Myxococcus</taxon>
    </lineage>
</organism>
<dbReference type="EMBL" id="CP000113">
    <property type="protein sequence ID" value="ABF92206.1"/>
    <property type="molecule type" value="Genomic_DNA"/>
</dbReference>
<dbReference type="RefSeq" id="WP_002636699.1">
    <property type="nucleotide sequence ID" value="NC_008095.1"/>
</dbReference>
<dbReference type="SMR" id="Q1D3H0"/>
<dbReference type="STRING" id="246197.MXAN_4637"/>
<dbReference type="EnsemblBacteria" id="ABF92206">
    <property type="protein sequence ID" value="ABF92206"/>
    <property type="gene ID" value="MXAN_4637"/>
</dbReference>
<dbReference type="GeneID" id="41361937"/>
<dbReference type="KEGG" id="mxa:MXAN_4637"/>
<dbReference type="eggNOG" id="COG1664">
    <property type="taxonomic scope" value="Bacteria"/>
</dbReference>
<dbReference type="HOGENOM" id="CLU_072799_4_3_7"/>
<dbReference type="OrthoDB" id="119922at2"/>
<dbReference type="Proteomes" id="UP000002402">
    <property type="component" value="Chromosome"/>
</dbReference>
<dbReference type="GO" id="GO:0005737">
    <property type="term" value="C:cytoplasm"/>
    <property type="evidence" value="ECO:0007669"/>
    <property type="project" value="UniProtKB-KW"/>
</dbReference>
<dbReference type="GO" id="GO:0005856">
    <property type="term" value="C:cytoskeleton"/>
    <property type="evidence" value="ECO:0007669"/>
    <property type="project" value="UniProtKB-SubCell"/>
</dbReference>
<dbReference type="GO" id="GO:0007059">
    <property type="term" value="P:chromosome segregation"/>
    <property type="evidence" value="ECO:0007669"/>
    <property type="project" value="UniProtKB-KW"/>
</dbReference>
<dbReference type="Gene3D" id="2.160.20.120">
    <property type="match status" value="1"/>
</dbReference>
<dbReference type="InterPro" id="IPR007607">
    <property type="entry name" value="BacA/B"/>
</dbReference>
<dbReference type="PANTHER" id="PTHR35024">
    <property type="entry name" value="HYPOTHETICAL CYTOSOLIC PROTEIN"/>
    <property type="match status" value="1"/>
</dbReference>
<dbReference type="PANTHER" id="PTHR35024:SF4">
    <property type="entry name" value="POLYMER-FORMING CYTOSKELETAL PROTEIN"/>
    <property type="match status" value="1"/>
</dbReference>
<dbReference type="Pfam" id="PF04519">
    <property type="entry name" value="Bactofilin"/>
    <property type="match status" value="1"/>
</dbReference>
<sequence>MATGETGIIGKGIVIKGNLTGGGDLVIEGRVEGQIALKNHLTIESTGKVQADIRAEELTINGEASGNIDASSRVAINASAKVAGDIKAPRVVIEDGAVFNGSIEMDVRLPDDI</sequence>
<proteinExistence type="evidence at protein level"/>
<name>BACN_MYXXD</name>
<gene>
    <name evidence="3" type="primary">bacN</name>
    <name evidence="5" type="ordered locus">MXAN_4637</name>
</gene>
<protein>
    <recommendedName>
        <fullName evidence="3">Bactofilin BacN</fullName>
    </recommendedName>
</protein>